<reference key="1">
    <citation type="submission" date="2006-08" db="EMBL/GenBank/DDBJ databases">
        <title>Complete sequence of Alkalilimnicola ehrilichei MLHE-1.</title>
        <authorList>
            <person name="Copeland A."/>
            <person name="Lucas S."/>
            <person name="Lapidus A."/>
            <person name="Barry K."/>
            <person name="Detter J.C."/>
            <person name="Glavina del Rio T."/>
            <person name="Hammon N."/>
            <person name="Israni S."/>
            <person name="Dalin E."/>
            <person name="Tice H."/>
            <person name="Pitluck S."/>
            <person name="Sims D."/>
            <person name="Brettin T."/>
            <person name="Bruce D."/>
            <person name="Han C."/>
            <person name="Tapia R."/>
            <person name="Gilna P."/>
            <person name="Schmutz J."/>
            <person name="Larimer F."/>
            <person name="Land M."/>
            <person name="Hauser L."/>
            <person name="Kyrpides N."/>
            <person name="Mikhailova N."/>
            <person name="Oremland R.S."/>
            <person name="Hoeft S.E."/>
            <person name="Switzer-Blum J."/>
            <person name="Kulp T."/>
            <person name="King G."/>
            <person name="Tabita R."/>
            <person name="Witte B."/>
            <person name="Santini J.M."/>
            <person name="Basu P."/>
            <person name="Hollibaugh J.T."/>
            <person name="Xie G."/>
            <person name="Stolz J.F."/>
            <person name="Richardson P."/>
        </authorList>
    </citation>
    <scope>NUCLEOTIDE SEQUENCE [LARGE SCALE GENOMIC DNA]</scope>
    <source>
        <strain>ATCC BAA-1101 / DSM 17681 / MLHE-1</strain>
    </source>
</reference>
<evidence type="ECO:0000250" key="1"/>
<evidence type="ECO:0000255" key="2">
    <source>
        <dbReference type="HAMAP-Rule" id="MF_00100"/>
    </source>
</evidence>
<evidence type="ECO:0000256" key="3">
    <source>
        <dbReference type="SAM" id="MobiDB-lite"/>
    </source>
</evidence>
<organism>
    <name type="scientific">Alkalilimnicola ehrlichii (strain ATCC BAA-1101 / DSM 17681 / MLHE-1)</name>
    <dbReference type="NCBI Taxonomy" id="187272"/>
    <lineage>
        <taxon>Bacteria</taxon>
        <taxon>Pseudomonadati</taxon>
        <taxon>Pseudomonadota</taxon>
        <taxon>Gammaproteobacteria</taxon>
        <taxon>Chromatiales</taxon>
        <taxon>Ectothiorhodospiraceae</taxon>
        <taxon>Alkalilimnicola</taxon>
    </lineage>
</organism>
<keyword id="KW-0963">Cytoplasm</keyword>
<keyword id="KW-0342">GTP-binding</keyword>
<keyword id="KW-0396">Initiation factor</keyword>
<keyword id="KW-0547">Nucleotide-binding</keyword>
<keyword id="KW-0648">Protein biosynthesis</keyword>
<keyword id="KW-1185">Reference proteome</keyword>
<accession>Q0A797</accession>
<name>IF2_ALKEH</name>
<protein>
    <recommendedName>
        <fullName evidence="2">Translation initiation factor IF-2</fullName>
    </recommendedName>
</protein>
<feature type="chain" id="PRO_1000008194" description="Translation initiation factor IF-2">
    <location>
        <begin position="1"/>
        <end position="883"/>
    </location>
</feature>
<feature type="domain" description="tr-type G">
    <location>
        <begin position="383"/>
        <end position="550"/>
    </location>
</feature>
<feature type="region of interest" description="Disordered" evidence="3">
    <location>
        <begin position="52"/>
        <end position="102"/>
    </location>
</feature>
<feature type="region of interest" description="Disordered" evidence="3">
    <location>
        <begin position="115"/>
        <end position="297"/>
    </location>
</feature>
<feature type="region of interest" description="G1" evidence="1">
    <location>
        <begin position="392"/>
        <end position="399"/>
    </location>
</feature>
<feature type="region of interest" description="G2" evidence="1">
    <location>
        <begin position="417"/>
        <end position="421"/>
    </location>
</feature>
<feature type="region of interest" description="G3" evidence="1">
    <location>
        <begin position="438"/>
        <end position="441"/>
    </location>
</feature>
<feature type="region of interest" description="G4" evidence="1">
    <location>
        <begin position="492"/>
        <end position="495"/>
    </location>
</feature>
<feature type="region of interest" description="G5" evidence="1">
    <location>
        <begin position="528"/>
        <end position="530"/>
    </location>
</feature>
<feature type="compositionally biased region" description="Basic and acidic residues" evidence="3">
    <location>
        <begin position="115"/>
        <end position="179"/>
    </location>
</feature>
<feature type="compositionally biased region" description="Basic and acidic residues" evidence="3">
    <location>
        <begin position="204"/>
        <end position="237"/>
    </location>
</feature>
<feature type="compositionally biased region" description="Low complexity" evidence="3">
    <location>
        <begin position="239"/>
        <end position="248"/>
    </location>
</feature>
<feature type="compositionally biased region" description="Basic residues" evidence="3">
    <location>
        <begin position="265"/>
        <end position="275"/>
    </location>
</feature>
<feature type="compositionally biased region" description="Low complexity" evidence="3">
    <location>
        <begin position="276"/>
        <end position="285"/>
    </location>
</feature>
<feature type="binding site" evidence="2">
    <location>
        <begin position="392"/>
        <end position="399"/>
    </location>
    <ligand>
        <name>GTP</name>
        <dbReference type="ChEBI" id="CHEBI:37565"/>
    </ligand>
</feature>
<feature type="binding site" evidence="2">
    <location>
        <begin position="438"/>
        <end position="442"/>
    </location>
    <ligand>
        <name>GTP</name>
        <dbReference type="ChEBI" id="CHEBI:37565"/>
    </ligand>
</feature>
<feature type="binding site" evidence="2">
    <location>
        <begin position="492"/>
        <end position="495"/>
    </location>
    <ligand>
        <name>GTP</name>
        <dbReference type="ChEBI" id="CHEBI:37565"/>
    </ligand>
</feature>
<dbReference type="EMBL" id="CP000453">
    <property type="protein sequence ID" value="ABI57290.1"/>
    <property type="molecule type" value="Genomic_DNA"/>
</dbReference>
<dbReference type="RefSeq" id="WP_011629684.1">
    <property type="nucleotide sequence ID" value="NC_008340.1"/>
</dbReference>
<dbReference type="SMR" id="Q0A797"/>
<dbReference type="KEGG" id="aeh:Mlg_1948"/>
<dbReference type="eggNOG" id="COG0532">
    <property type="taxonomic scope" value="Bacteria"/>
</dbReference>
<dbReference type="HOGENOM" id="CLU_006301_6_3_6"/>
<dbReference type="OrthoDB" id="9811804at2"/>
<dbReference type="Proteomes" id="UP000001962">
    <property type="component" value="Chromosome"/>
</dbReference>
<dbReference type="GO" id="GO:0005829">
    <property type="term" value="C:cytosol"/>
    <property type="evidence" value="ECO:0007669"/>
    <property type="project" value="TreeGrafter"/>
</dbReference>
<dbReference type="GO" id="GO:0005525">
    <property type="term" value="F:GTP binding"/>
    <property type="evidence" value="ECO:0007669"/>
    <property type="project" value="UniProtKB-KW"/>
</dbReference>
<dbReference type="GO" id="GO:0003924">
    <property type="term" value="F:GTPase activity"/>
    <property type="evidence" value="ECO:0007669"/>
    <property type="project" value="UniProtKB-UniRule"/>
</dbReference>
<dbReference type="GO" id="GO:0003743">
    <property type="term" value="F:translation initiation factor activity"/>
    <property type="evidence" value="ECO:0007669"/>
    <property type="project" value="UniProtKB-UniRule"/>
</dbReference>
<dbReference type="CDD" id="cd01887">
    <property type="entry name" value="IF2_eIF5B"/>
    <property type="match status" value="1"/>
</dbReference>
<dbReference type="CDD" id="cd03702">
    <property type="entry name" value="IF2_mtIF2_II"/>
    <property type="match status" value="1"/>
</dbReference>
<dbReference type="CDD" id="cd03692">
    <property type="entry name" value="mtIF2_IVc"/>
    <property type="match status" value="1"/>
</dbReference>
<dbReference type="FunFam" id="2.40.30.10:FF:000007">
    <property type="entry name" value="Translation initiation factor IF-2"/>
    <property type="match status" value="1"/>
</dbReference>
<dbReference type="FunFam" id="2.40.30.10:FF:000008">
    <property type="entry name" value="Translation initiation factor IF-2"/>
    <property type="match status" value="1"/>
</dbReference>
<dbReference type="FunFam" id="3.40.50.10050:FF:000001">
    <property type="entry name" value="Translation initiation factor IF-2"/>
    <property type="match status" value="1"/>
</dbReference>
<dbReference type="FunFam" id="3.40.50.300:FF:000019">
    <property type="entry name" value="Translation initiation factor IF-2"/>
    <property type="match status" value="1"/>
</dbReference>
<dbReference type="Gene3D" id="3.40.50.300">
    <property type="entry name" value="P-loop containing nucleotide triphosphate hydrolases"/>
    <property type="match status" value="1"/>
</dbReference>
<dbReference type="Gene3D" id="3.30.56.50">
    <property type="entry name" value="Putative DNA-binding domain, N-terminal subdomain of bacterial translation initiation factor IF2"/>
    <property type="match status" value="1"/>
</dbReference>
<dbReference type="Gene3D" id="2.40.30.10">
    <property type="entry name" value="Translation factors"/>
    <property type="match status" value="2"/>
</dbReference>
<dbReference type="Gene3D" id="3.40.50.10050">
    <property type="entry name" value="Translation initiation factor IF- 2, domain 3"/>
    <property type="match status" value="1"/>
</dbReference>
<dbReference type="HAMAP" id="MF_00100_B">
    <property type="entry name" value="IF_2_B"/>
    <property type="match status" value="1"/>
</dbReference>
<dbReference type="InterPro" id="IPR009061">
    <property type="entry name" value="DNA-bd_dom_put_sf"/>
</dbReference>
<dbReference type="InterPro" id="IPR053905">
    <property type="entry name" value="EF-G-like_DII"/>
</dbReference>
<dbReference type="InterPro" id="IPR013575">
    <property type="entry name" value="IF2_assoc_dom_bac"/>
</dbReference>
<dbReference type="InterPro" id="IPR044145">
    <property type="entry name" value="IF2_II"/>
</dbReference>
<dbReference type="InterPro" id="IPR006847">
    <property type="entry name" value="IF2_N"/>
</dbReference>
<dbReference type="InterPro" id="IPR027417">
    <property type="entry name" value="P-loop_NTPase"/>
</dbReference>
<dbReference type="InterPro" id="IPR005225">
    <property type="entry name" value="Small_GTP-bd"/>
</dbReference>
<dbReference type="InterPro" id="IPR000795">
    <property type="entry name" value="T_Tr_GTP-bd_dom"/>
</dbReference>
<dbReference type="InterPro" id="IPR000178">
    <property type="entry name" value="TF_IF2_bacterial-like"/>
</dbReference>
<dbReference type="InterPro" id="IPR015760">
    <property type="entry name" value="TIF_IF2"/>
</dbReference>
<dbReference type="InterPro" id="IPR023115">
    <property type="entry name" value="TIF_IF2_dom3"/>
</dbReference>
<dbReference type="InterPro" id="IPR036925">
    <property type="entry name" value="TIF_IF2_dom3_sf"/>
</dbReference>
<dbReference type="InterPro" id="IPR009000">
    <property type="entry name" value="Transl_B-barrel_sf"/>
</dbReference>
<dbReference type="NCBIfam" id="TIGR00487">
    <property type="entry name" value="IF-2"/>
    <property type="match status" value="1"/>
</dbReference>
<dbReference type="NCBIfam" id="TIGR00231">
    <property type="entry name" value="small_GTP"/>
    <property type="match status" value="1"/>
</dbReference>
<dbReference type="PANTHER" id="PTHR43381:SF5">
    <property type="entry name" value="TR-TYPE G DOMAIN-CONTAINING PROTEIN"/>
    <property type="match status" value="1"/>
</dbReference>
<dbReference type="PANTHER" id="PTHR43381">
    <property type="entry name" value="TRANSLATION INITIATION FACTOR IF-2-RELATED"/>
    <property type="match status" value="1"/>
</dbReference>
<dbReference type="Pfam" id="PF22042">
    <property type="entry name" value="EF-G_D2"/>
    <property type="match status" value="1"/>
</dbReference>
<dbReference type="Pfam" id="PF00009">
    <property type="entry name" value="GTP_EFTU"/>
    <property type="match status" value="1"/>
</dbReference>
<dbReference type="Pfam" id="PF11987">
    <property type="entry name" value="IF-2"/>
    <property type="match status" value="1"/>
</dbReference>
<dbReference type="Pfam" id="PF08364">
    <property type="entry name" value="IF2_assoc"/>
    <property type="match status" value="1"/>
</dbReference>
<dbReference type="Pfam" id="PF04760">
    <property type="entry name" value="IF2_N"/>
    <property type="match status" value="1"/>
</dbReference>
<dbReference type="SUPFAM" id="SSF52156">
    <property type="entry name" value="Initiation factor IF2/eIF5b, domain 3"/>
    <property type="match status" value="1"/>
</dbReference>
<dbReference type="SUPFAM" id="SSF52540">
    <property type="entry name" value="P-loop containing nucleoside triphosphate hydrolases"/>
    <property type="match status" value="1"/>
</dbReference>
<dbReference type="SUPFAM" id="SSF46955">
    <property type="entry name" value="Putative DNA-binding domain"/>
    <property type="match status" value="1"/>
</dbReference>
<dbReference type="SUPFAM" id="SSF50447">
    <property type="entry name" value="Translation proteins"/>
    <property type="match status" value="2"/>
</dbReference>
<dbReference type="PROSITE" id="PS51722">
    <property type="entry name" value="G_TR_2"/>
    <property type="match status" value="1"/>
</dbReference>
<dbReference type="PROSITE" id="PS01176">
    <property type="entry name" value="IF2"/>
    <property type="match status" value="1"/>
</dbReference>
<gene>
    <name evidence="2" type="primary">infB</name>
    <name type="ordered locus">Mlg_1948</name>
</gene>
<proteinExistence type="inferred from homology"/>
<comment type="function">
    <text evidence="2">One of the essential components for the initiation of protein synthesis. Protects formylmethionyl-tRNA from spontaneous hydrolysis and promotes its binding to the 30S ribosomal subunits. Also involved in the hydrolysis of GTP during the formation of the 70S ribosomal complex.</text>
</comment>
<comment type="subcellular location">
    <subcellularLocation>
        <location evidence="2">Cytoplasm</location>
    </subcellularLocation>
</comment>
<comment type="similarity">
    <text evidence="2">Belongs to the TRAFAC class translation factor GTPase superfamily. Classic translation factor GTPase family. IF-2 subfamily.</text>
</comment>
<sequence length="883" mass="96386">MAEDKVREFAETVGIPVERLVSQLEAAGISGRGPEDPLSDLDKATLLEYLRKGRDGGEQDDDQAPSKITLRRKKVSTLKMPASGGGGSGARGPRQTRTVNVEVRKKRTYVKRSVVEAEESKHDVERLERALIEDRKRAEERARREAEEAEARRREQEEAERRQAEAEALRQAEAEREATAETAGVADEADKAEPQPDPEAARLAAEKEEARRREEEKERRRLEQEARREREAEERAARKTGATAPAAKGKQKKGRESLSMGAGKPGRRGGKKGGRRAASGGEAAKQLQHGFAKPTQPVVREVEIPESITVGDLAQKMSVKAAVLIKEMMKQGVMATINQALDQDTAVLLVEEMGHKPVIVRADALEEEVLQDTSQAQEGDKAPRPPVVTVMGHVDHGKTSLLDNIRRAKVADAEAGGITQHIGAYHVETDRGMVTFLDTPGHEAFTAMRARGAQLTDIVVLVVAADDGVMPQTEEAVRHAKAAEVPMVVAVNKIDKPDADPDRVKQELSQMEVIPEEWGGDVQFIHVSAKQGEGLDDLLEAILLQAELMELGAVAEGNASGIVLESSLDKGRGPVATVLVQSGLLKKGDSLLCGTEYGRVRALIDETGKRVDEAGPSIPVVVLGLSGLPSAGDDMVVVDDEKKAREVAEMRKERQRDKRLAQQQAARMENLFNQMKEDEVNTVNLVVKADVQGSAEALQQSLANLSTDDIQVKVISSGVGAINESDVNLALASNAILIGFNVRADAAARRLVQENDVDLHYYSVIYDAIEQVKNAISGMLEPELEEHIIGLAEVKDVFRSSKLGAVAGCLVTEGAVRRKNPIRVLRDNVVIYEGELESLRRHKDDVTEVKSGTECGIGVKNYNDVRIGDQIECYERVEVRREL</sequence>